<reference key="1">
    <citation type="submission" date="2006-09" db="EMBL/GenBank/DDBJ databases">
        <authorList>
            <consortium name="The Klebsiella pneumonia Genome Sequencing Project"/>
            <person name="McClelland M."/>
            <person name="Sanderson E.K."/>
            <person name="Spieth J."/>
            <person name="Clifton W.S."/>
            <person name="Latreille P."/>
            <person name="Sabo A."/>
            <person name="Pepin K."/>
            <person name="Bhonagiri V."/>
            <person name="Porwollik S."/>
            <person name="Ali J."/>
            <person name="Wilson R.K."/>
        </authorList>
    </citation>
    <scope>NUCLEOTIDE SEQUENCE [LARGE SCALE GENOMIC DNA]</scope>
    <source>
        <strain>ATCC 700721 / MGH 78578</strain>
    </source>
</reference>
<feature type="chain" id="PRO_1000022196" description="Glycine cleavage system H protein">
    <location>
        <begin position="1"/>
        <end position="129"/>
    </location>
</feature>
<feature type="domain" description="Lipoyl-binding" evidence="2">
    <location>
        <begin position="24"/>
        <end position="106"/>
    </location>
</feature>
<feature type="modified residue" description="N6-lipoyllysine" evidence="1">
    <location>
        <position position="65"/>
    </location>
</feature>
<comment type="function">
    <text evidence="1">The glycine cleavage system catalyzes the degradation of glycine. The H protein shuttles the methylamine group of glycine from the P protein to the T protein.</text>
</comment>
<comment type="cofactor">
    <cofactor evidence="1">
        <name>(R)-lipoate</name>
        <dbReference type="ChEBI" id="CHEBI:83088"/>
    </cofactor>
    <text evidence="1">Binds 1 lipoyl cofactor covalently.</text>
</comment>
<comment type="subunit">
    <text evidence="1">The glycine cleavage system is composed of four proteins: P, T, L and H.</text>
</comment>
<comment type="similarity">
    <text evidence="1">Belongs to the GcvH family.</text>
</comment>
<keyword id="KW-0450">Lipoyl</keyword>
<gene>
    <name evidence="1" type="primary">gcvH</name>
    <name type="ordered locus">KPN78578_32760</name>
    <name type="ORF">KPN_03340</name>
</gene>
<accession>A6TDR6</accession>
<sequence length="129" mass="13875">MSNVPAELKYSKEHEWLRKEAEGTYTVGITEHAQELLGDMVFVDLPEVGATVEAGADCAVAESVKAASDIYAPISGEIVAVNEELNDSPELVNSDPYTDGWIFKIKASDEAQVAALLDAAAYEALLEDE</sequence>
<proteinExistence type="inferred from homology"/>
<protein>
    <recommendedName>
        <fullName evidence="1">Glycine cleavage system H protein</fullName>
    </recommendedName>
</protein>
<organism>
    <name type="scientific">Klebsiella pneumoniae subsp. pneumoniae (strain ATCC 700721 / MGH 78578)</name>
    <dbReference type="NCBI Taxonomy" id="272620"/>
    <lineage>
        <taxon>Bacteria</taxon>
        <taxon>Pseudomonadati</taxon>
        <taxon>Pseudomonadota</taxon>
        <taxon>Gammaproteobacteria</taxon>
        <taxon>Enterobacterales</taxon>
        <taxon>Enterobacteriaceae</taxon>
        <taxon>Klebsiella/Raoultella group</taxon>
        <taxon>Klebsiella</taxon>
        <taxon>Klebsiella pneumoniae complex</taxon>
    </lineage>
</organism>
<name>GCSH_KLEP7</name>
<evidence type="ECO:0000255" key="1">
    <source>
        <dbReference type="HAMAP-Rule" id="MF_00272"/>
    </source>
</evidence>
<evidence type="ECO:0000255" key="2">
    <source>
        <dbReference type="PROSITE-ProRule" id="PRU01066"/>
    </source>
</evidence>
<dbReference type="EMBL" id="CP000647">
    <property type="protein sequence ID" value="ABR78737.1"/>
    <property type="molecule type" value="Genomic_DNA"/>
</dbReference>
<dbReference type="RefSeq" id="WP_015958958.1">
    <property type="nucleotide sequence ID" value="NC_009648.1"/>
</dbReference>
<dbReference type="SMR" id="A6TDR6"/>
<dbReference type="STRING" id="272620.KPN_03340"/>
<dbReference type="jPOST" id="A6TDR6"/>
<dbReference type="PaxDb" id="272620-KPN_03340"/>
<dbReference type="EnsemblBacteria" id="ABR78737">
    <property type="protein sequence ID" value="ABR78737"/>
    <property type="gene ID" value="KPN_03340"/>
</dbReference>
<dbReference type="KEGG" id="kpn:KPN_03340"/>
<dbReference type="HOGENOM" id="CLU_097408_2_1_6"/>
<dbReference type="Proteomes" id="UP000000265">
    <property type="component" value="Chromosome"/>
</dbReference>
<dbReference type="GO" id="GO:0005829">
    <property type="term" value="C:cytosol"/>
    <property type="evidence" value="ECO:0007669"/>
    <property type="project" value="TreeGrafter"/>
</dbReference>
<dbReference type="GO" id="GO:0005960">
    <property type="term" value="C:glycine cleavage complex"/>
    <property type="evidence" value="ECO:0007669"/>
    <property type="project" value="InterPro"/>
</dbReference>
<dbReference type="GO" id="GO:0019464">
    <property type="term" value="P:glycine decarboxylation via glycine cleavage system"/>
    <property type="evidence" value="ECO:0007669"/>
    <property type="project" value="UniProtKB-UniRule"/>
</dbReference>
<dbReference type="CDD" id="cd06848">
    <property type="entry name" value="GCS_H"/>
    <property type="match status" value="1"/>
</dbReference>
<dbReference type="FunFam" id="2.40.50.100:FF:000011">
    <property type="entry name" value="Glycine cleavage system H protein"/>
    <property type="match status" value="1"/>
</dbReference>
<dbReference type="Gene3D" id="2.40.50.100">
    <property type="match status" value="1"/>
</dbReference>
<dbReference type="HAMAP" id="MF_00272">
    <property type="entry name" value="GcvH"/>
    <property type="match status" value="1"/>
</dbReference>
<dbReference type="InterPro" id="IPR003016">
    <property type="entry name" value="2-oxoA_DH_lipoyl-BS"/>
</dbReference>
<dbReference type="InterPro" id="IPR000089">
    <property type="entry name" value="Biotin_lipoyl"/>
</dbReference>
<dbReference type="InterPro" id="IPR002930">
    <property type="entry name" value="GCV_H"/>
</dbReference>
<dbReference type="InterPro" id="IPR033753">
    <property type="entry name" value="GCV_H/Fam206"/>
</dbReference>
<dbReference type="InterPro" id="IPR017453">
    <property type="entry name" value="GCV_H_sub"/>
</dbReference>
<dbReference type="InterPro" id="IPR011053">
    <property type="entry name" value="Single_hybrid_motif"/>
</dbReference>
<dbReference type="NCBIfam" id="TIGR00527">
    <property type="entry name" value="gcvH"/>
    <property type="match status" value="1"/>
</dbReference>
<dbReference type="NCBIfam" id="NF002270">
    <property type="entry name" value="PRK01202.1"/>
    <property type="match status" value="1"/>
</dbReference>
<dbReference type="PANTHER" id="PTHR11715">
    <property type="entry name" value="GLYCINE CLEAVAGE SYSTEM H PROTEIN"/>
    <property type="match status" value="1"/>
</dbReference>
<dbReference type="PANTHER" id="PTHR11715:SF3">
    <property type="entry name" value="GLYCINE CLEAVAGE SYSTEM H PROTEIN-RELATED"/>
    <property type="match status" value="1"/>
</dbReference>
<dbReference type="Pfam" id="PF01597">
    <property type="entry name" value="GCV_H"/>
    <property type="match status" value="1"/>
</dbReference>
<dbReference type="SUPFAM" id="SSF51230">
    <property type="entry name" value="Single hybrid motif"/>
    <property type="match status" value="1"/>
</dbReference>
<dbReference type="PROSITE" id="PS50968">
    <property type="entry name" value="BIOTINYL_LIPOYL"/>
    <property type="match status" value="1"/>
</dbReference>
<dbReference type="PROSITE" id="PS00189">
    <property type="entry name" value="LIPOYL"/>
    <property type="match status" value="1"/>
</dbReference>